<sequence>MAKPATILIKLLSTAGTGFFYVAKKNPRKTTEKLEFRKYDPVVRKHVQFKEAKIK</sequence>
<name>RL33_PARM1</name>
<protein>
    <recommendedName>
        <fullName evidence="1">Large ribosomal subunit protein bL33</fullName>
    </recommendedName>
    <alternativeName>
        <fullName evidence="2">50S ribosomal protein L33</fullName>
    </alternativeName>
</protein>
<dbReference type="EMBL" id="AP007255">
    <property type="protein sequence ID" value="BAE52373.1"/>
    <property type="molecule type" value="Genomic_DNA"/>
</dbReference>
<dbReference type="RefSeq" id="WP_002725389.1">
    <property type="nucleotide sequence ID" value="NC_007626.1"/>
</dbReference>
<dbReference type="SMR" id="Q2W1A2"/>
<dbReference type="STRING" id="342108.amb3569"/>
<dbReference type="KEGG" id="mag:amb3569"/>
<dbReference type="HOGENOM" id="CLU_190949_1_1_5"/>
<dbReference type="OrthoDB" id="21586at2"/>
<dbReference type="Proteomes" id="UP000007058">
    <property type="component" value="Chromosome"/>
</dbReference>
<dbReference type="GO" id="GO:0005737">
    <property type="term" value="C:cytoplasm"/>
    <property type="evidence" value="ECO:0007669"/>
    <property type="project" value="UniProtKB-ARBA"/>
</dbReference>
<dbReference type="GO" id="GO:0015934">
    <property type="term" value="C:large ribosomal subunit"/>
    <property type="evidence" value="ECO:0007669"/>
    <property type="project" value="TreeGrafter"/>
</dbReference>
<dbReference type="GO" id="GO:0003735">
    <property type="term" value="F:structural constituent of ribosome"/>
    <property type="evidence" value="ECO:0007669"/>
    <property type="project" value="InterPro"/>
</dbReference>
<dbReference type="GO" id="GO:0006412">
    <property type="term" value="P:translation"/>
    <property type="evidence" value="ECO:0007669"/>
    <property type="project" value="UniProtKB-UniRule"/>
</dbReference>
<dbReference type="FunFam" id="2.20.28.120:FF:000006">
    <property type="entry name" value="50S ribosomal protein L33"/>
    <property type="match status" value="1"/>
</dbReference>
<dbReference type="Gene3D" id="2.20.28.120">
    <property type="entry name" value="Ribosomal protein L33"/>
    <property type="match status" value="1"/>
</dbReference>
<dbReference type="HAMAP" id="MF_00294">
    <property type="entry name" value="Ribosomal_bL33"/>
    <property type="match status" value="1"/>
</dbReference>
<dbReference type="InterPro" id="IPR001705">
    <property type="entry name" value="Ribosomal_bL33"/>
</dbReference>
<dbReference type="InterPro" id="IPR038584">
    <property type="entry name" value="Ribosomal_bL33_sf"/>
</dbReference>
<dbReference type="InterPro" id="IPR011332">
    <property type="entry name" value="Ribosomal_zn-bd"/>
</dbReference>
<dbReference type="NCBIfam" id="NF001860">
    <property type="entry name" value="PRK00595.1"/>
    <property type="match status" value="1"/>
</dbReference>
<dbReference type="NCBIfam" id="TIGR01023">
    <property type="entry name" value="rpmG_bact"/>
    <property type="match status" value="1"/>
</dbReference>
<dbReference type="PANTHER" id="PTHR15238">
    <property type="entry name" value="54S RIBOSOMAL PROTEIN L39, MITOCHONDRIAL"/>
    <property type="match status" value="1"/>
</dbReference>
<dbReference type="PANTHER" id="PTHR15238:SF1">
    <property type="entry name" value="LARGE RIBOSOMAL SUBUNIT PROTEIN BL33M"/>
    <property type="match status" value="1"/>
</dbReference>
<dbReference type="Pfam" id="PF00471">
    <property type="entry name" value="Ribosomal_L33"/>
    <property type="match status" value="1"/>
</dbReference>
<dbReference type="SUPFAM" id="SSF57829">
    <property type="entry name" value="Zn-binding ribosomal proteins"/>
    <property type="match status" value="1"/>
</dbReference>
<accession>Q2W1A2</accession>
<evidence type="ECO:0000255" key="1">
    <source>
        <dbReference type="HAMAP-Rule" id="MF_00294"/>
    </source>
</evidence>
<evidence type="ECO:0000305" key="2"/>
<gene>
    <name evidence="1" type="primary">rpmG</name>
    <name type="ordered locus">amb3569</name>
</gene>
<reference key="1">
    <citation type="journal article" date="2005" name="DNA Res.">
        <title>Complete genome sequence of the facultative anaerobic magnetotactic bacterium Magnetospirillum sp. strain AMB-1.</title>
        <authorList>
            <person name="Matsunaga T."/>
            <person name="Okamura Y."/>
            <person name="Fukuda Y."/>
            <person name="Wahyudi A.T."/>
            <person name="Murase Y."/>
            <person name="Takeyama H."/>
        </authorList>
    </citation>
    <scope>NUCLEOTIDE SEQUENCE [LARGE SCALE GENOMIC DNA]</scope>
    <source>
        <strain>ATCC 700264 / AMB-1</strain>
    </source>
</reference>
<organism>
    <name type="scientific">Paramagnetospirillum magneticum (strain ATCC 700264 / AMB-1)</name>
    <name type="common">Magnetospirillum magneticum</name>
    <dbReference type="NCBI Taxonomy" id="342108"/>
    <lineage>
        <taxon>Bacteria</taxon>
        <taxon>Pseudomonadati</taxon>
        <taxon>Pseudomonadota</taxon>
        <taxon>Alphaproteobacteria</taxon>
        <taxon>Rhodospirillales</taxon>
        <taxon>Magnetospirillaceae</taxon>
        <taxon>Paramagnetospirillum</taxon>
    </lineage>
</organism>
<keyword id="KW-0687">Ribonucleoprotein</keyword>
<keyword id="KW-0689">Ribosomal protein</keyword>
<proteinExistence type="inferred from homology"/>
<comment type="similarity">
    <text evidence="1">Belongs to the bacterial ribosomal protein bL33 family.</text>
</comment>
<feature type="chain" id="PRO_0000356533" description="Large ribosomal subunit protein bL33">
    <location>
        <begin position="1"/>
        <end position="55"/>
    </location>
</feature>